<reference key="1">
    <citation type="journal article" date="1997" name="J. Bacteriol.">
        <title>Strategies used by pathogenic and nonpathogenic mycobacteria to synthesize rRNA.</title>
        <authorList>
            <person name="Gonzalez-y-Merchand J.A."/>
            <person name="Garcia M.J."/>
            <person name="Gonzalez-Rico S."/>
            <person name="Colston M.J."/>
            <person name="Cox R.A."/>
        </authorList>
    </citation>
    <scope>NUCLEOTIDE SEQUENCE [GENOMIC DNA]</scope>
    <source>
        <strain>ATCC 11758 / DSM 43239 / BCRC 10707 / JCM 6385 / NCTC 8151 / NRRL B-14615</strain>
    </source>
</reference>
<evidence type="ECO:0000250" key="1"/>
<evidence type="ECO:0000250" key="2">
    <source>
        <dbReference type="UniProtKB" id="P0A749"/>
    </source>
</evidence>
<evidence type="ECO:0000305" key="3"/>
<dbReference type="EC" id="2.5.1.7"/>
<dbReference type="EMBL" id="X99776">
    <property type="protein sequence ID" value="CAA68120.1"/>
    <property type="molecule type" value="Genomic_DNA"/>
</dbReference>
<dbReference type="SMR" id="O33160"/>
<dbReference type="STRING" id="1771.MPHLCCUG_03910"/>
<dbReference type="UniPathway" id="UPA00219"/>
<dbReference type="GO" id="GO:0005737">
    <property type="term" value="C:cytoplasm"/>
    <property type="evidence" value="ECO:0007669"/>
    <property type="project" value="UniProtKB-SubCell"/>
</dbReference>
<dbReference type="GO" id="GO:0008760">
    <property type="term" value="F:UDP-N-acetylglucosamine 1-carboxyvinyltransferase activity"/>
    <property type="evidence" value="ECO:0007669"/>
    <property type="project" value="UniProtKB-EC"/>
</dbReference>
<dbReference type="GO" id="GO:0051301">
    <property type="term" value="P:cell division"/>
    <property type="evidence" value="ECO:0007669"/>
    <property type="project" value="UniProtKB-KW"/>
</dbReference>
<dbReference type="GO" id="GO:0071555">
    <property type="term" value="P:cell wall organization"/>
    <property type="evidence" value="ECO:0007669"/>
    <property type="project" value="UniProtKB-KW"/>
</dbReference>
<dbReference type="GO" id="GO:0009252">
    <property type="term" value="P:peptidoglycan biosynthetic process"/>
    <property type="evidence" value="ECO:0007669"/>
    <property type="project" value="UniProtKB-UniPathway"/>
</dbReference>
<dbReference type="GO" id="GO:0008360">
    <property type="term" value="P:regulation of cell shape"/>
    <property type="evidence" value="ECO:0007669"/>
    <property type="project" value="UniProtKB-KW"/>
</dbReference>
<dbReference type="Gene3D" id="3.65.10.10">
    <property type="entry name" value="Enolpyruvate transferase domain"/>
    <property type="match status" value="1"/>
</dbReference>
<dbReference type="InterPro" id="IPR001986">
    <property type="entry name" value="Enolpyruvate_Tfrase_dom"/>
</dbReference>
<dbReference type="InterPro" id="IPR036968">
    <property type="entry name" value="Enolpyruvate_Tfrase_sf"/>
</dbReference>
<dbReference type="InterPro" id="IPR050068">
    <property type="entry name" value="MurA_subfamily"/>
</dbReference>
<dbReference type="InterPro" id="IPR013792">
    <property type="entry name" value="RNA3'P_cycl/enolpyr_Trfase_a/b"/>
</dbReference>
<dbReference type="PANTHER" id="PTHR43783">
    <property type="entry name" value="UDP-N-ACETYLGLUCOSAMINE 1-CARBOXYVINYLTRANSFERASE"/>
    <property type="match status" value="1"/>
</dbReference>
<dbReference type="PANTHER" id="PTHR43783:SF1">
    <property type="entry name" value="UDP-N-ACETYLGLUCOSAMINE 1-CARBOXYVINYLTRANSFERASE"/>
    <property type="match status" value="1"/>
</dbReference>
<dbReference type="Pfam" id="PF00275">
    <property type="entry name" value="EPSP_synthase"/>
    <property type="match status" value="1"/>
</dbReference>
<dbReference type="SUPFAM" id="SSF55205">
    <property type="entry name" value="EPT/RTPC-like"/>
    <property type="match status" value="1"/>
</dbReference>
<accession>O33160</accession>
<protein>
    <recommendedName>
        <fullName>UDP-N-acetylglucosamine 1-carboxyvinyltransferase</fullName>
        <ecNumber>2.5.1.7</ecNumber>
    </recommendedName>
    <alternativeName>
        <fullName>Enoylpyruvate transferase</fullName>
    </alternativeName>
    <alternativeName>
        <fullName>UDP-N-acetylglucosamine enolpyruvyl transferase</fullName>
        <shortName>EPT</shortName>
    </alternativeName>
</protein>
<name>MURA_MYCPH</name>
<proteinExistence type="inferred from homology"/>
<sequence>LQPMAIALASIADGTSMITENVFEARFRFVEEMVRLGADARTDGHHAVVRGIPQLSSAPVWSSDIRAGAGLVLAGLVADGETEVHDVFHIDRGYPLFVENLRSLGAEIERVA</sequence>
<feature type="chain" id="PRO_0000178896" description="UDP-N-acetylglucosamine 1-carboxyvinyltransferase">
    <location>
        <begin position="1" status="less than"/>
        <end position="112"/>
    </location>
</feature>
<feature type="binding site" evidence="2">
    <location>
        <position position="22"/>
    </location>
    <ligand>
        <name>UDP-N-acetyl-alpha-D-glucosamine</name>
        <dbReference type="ChEBI" id="CHEBI:57705"/>
    </ligand>
</feature>
<feature type="non-terminal residue">
    <location>
        <position position="1"/>
    </location>
</feature>
<comment type="function">
    <text evidence="1">Cell wall formation. Adds enolpyruvyl to UDP-N-acetylglucosamine (By similarity).</text>
</comment>
<comment type="catalytic activity">
    <reaction>
        <text>phosphoenolpyruvate + UDP-N-acetyl-alpha-D-glucosamine = UDP-N-acetyl-3-O-(1-carboxyvinyl)-alpha-D-glucosamine + phosphate</text>
        <dbReference type="Rhea" id="RHEA:18681"/>
        <dbReference type="ChEBI" id="CHEBI:43474"/>
        <dbReference type="ChEBI" id="CHEBI:57705"/>
        <dbReference type="ChEBI" id="CHEBI:58702"/>
        <dbReference type="ChEBI" id="CHEBI:68483"/>
        <dbReference type="EC" id="2.5.1.7"/>
    </reaction>
</comment>
<comment type="pathway">
    <text>Cell wall biogenesis; peptidoglycan biosynthesis.</text>
</comment>
<comment type="subcellular location">
    <subcellularLocation>
        <location evidence="1">Cytoplasm</location>
    </subcellularLocation>
</comment>
<comment type="similarity">
    <text evidence="3">Belongs to the EPSP synthase family. MurA subfamily.</text>
</comment>
<keyword id="KW-0131">Cell cycle</keyword>
<keyword id="KW-0132">Cell division</keyword>
<keyword id="KW-0133">Cell shape</keyword>
<keyword id="KW-0961">Cell wall biogenesis/degradation</keyword>
<keyword id="KW-0963">Cytoplasm</keyword>
<keyword id="KW-0573">Peptidoglycan synthesis</keyword>
<keyword id="KW-0808">Transferase</keyword>
<organism>
    <name type="scientific">Mycolicibacterium phlei</name>
    <name type="common">Mycobacterium phlei</name>
    <dbReference type="NCBI Taxonomy" id="1771"/>
    <lineage>
        <taxon>Bacteria</taxon>
        <taxon>Bacillati</taxon>
        <taxon>Actinomycetota</taxon>
        <taxon>Actinomycetes</taxon>
        <taxon>Mycobacteriales</taxon>
        <taxon>Mycobacteriaceae</taxon>
        <taxon>Mycolicibacterium</taxon>
    </lineage>
</organism>
<gene>
    <name type="primary">murA</name>
</gene>